<dbReference type="EC" id="6.1.1.14" evidence="1"/>
<dbReference type="EMBL" id="CP000112">
    <property type="protein sequence ID" value="ABB38830.1"/>
    <property type="molecule type" value="Genomic_DNA"/>
</dbReference>
<dbReference type="RefSeq" id="WP_011367935.1">
    <property type="nucleotide sequence ID" value="NC_007519.1"/>
</dbReference>
<dbReference type="SMR" id="Q30ZR6"/>
<dbReference type="STRING" id="207559.Dde_2033"/>
<dbReference type="KEGG" id="dde:Dde_2033"/>
<dbReference type="eggNOG" id="COG0751">
    <property type="taxonomic scope" value="Bacteria"/>
</dbReference>
<dbReference type="HOGENOM" id="CLU_007220_2_2_7"/>
<dbReference type="Proteomes" id="UP000002710">
    <property type="component" value="Chromosome"/>
</dbReference>
<dbReference type="GO" id="GO:0005829">
    <property type="term" value="C:cytosol"/>
    <property type="evidence" value="ECO:0007669"/>
    <property type="project" value="TreeGrafter"/>
</dbReference>
<dbReference type="GO" id="GO:0004814">
    <property type="term" value="F:arginine-tRNA ligase activity"/>
    <property type="evidence" value="ECO:0007669"/>
    <property type="project" value="InterPro"/>
</dbReference>
<dbReference type="GO" id="GO:0005524">
    <property type="term" value="F:ATP binding"/>
    <property type="evidence" value="ECO:0007669"/>
    <property type="project" value="UniProtKB-UniRule"/>
</dbReference>
<dbReference type="GO" id="GO:0004820">
    <property type="term" value="F:glycine-tRNA ligase activity"/>
    <property type="evidence" value="ECO:0007669"/>
    <property type="project" value="UniProtKB-UniRule"/>
</dbReference>
<dbReference type="GO" id="GO:0006420">
    <property type="term" value="P:arginyl-tRNA aminoacylation"/>
    <property type="evidence" value="ECO:0007669"/>
    <property type="project" value="InterPro"/>
</dbReference>
<dbReference type="GO" id="GO:0006426">
    <property type="term" value="P:glycyl-tRNA aminoacylation"/>
    <property type="evidence" value="ECO:0007669"/>
    <property type="project" value="UniProtKB-UniRule"/>
</dbReference>
<dbReference type="HAMAP" id="MF_00255">
    <property type="entry name" value="Gly_tRNA_synth_beta"/>
    <property type="match status" value="1"/>
</dbReference>
<dbReference type="InterPro" id="IPR008909">
    <property type="entry name" value="DALR_anticod-bd"/>
</dbReference>
<dbReference type="InterPro" id="IPR015944">
    <property type="entry name" value="Gly-tRNA-synth_bsu"/>
</dbReference>
<dbReference type="InterPro" id="IPR006194">
    <property type="entry name" value="Gly-tRNA-synth_heterodimer"/>
</dbReference>
<dbReference type="NCBIfam" id="TIGR00211">
    <property type="entry name" value="glyS"/>
    <property type="match status" value="1"/>
</dbReference>
<dbReference type="PANTHER" id="PTHR30075:SF2">
    <property type="entry name" value="GLYCINE--TRNA LIGASE, CHLOROPLASTIC_MITOCHONDRIAL 2"/>
    <property type="match status" value="1"/>
</dbReference>
<dbReference type="PANTHER" id="PTHR30075">
    <property type="entry name" value="GLYCYL-TRNA SYNTHETASE"/>
    <property type="match status" value="1"/>
</dbReference>
<dbReference type="Pfam" id="PF05746">
    <property type="entry name" value="DALR_1"/>
    <property type="match status" value="1"/>
</dbReference>
<dbReference type="Pfam" id="PF02092">
    <property type="entry name" value="tRNA_synt_2f"/>
    <property type="match status" value="1"/>
</dbReference>
<dbReference type="PRINTS" id="PR01045">
    <property type="entry name" value="TRNASYNTHGB"/>
</dbReference>
<dbReference type="SUPFAM" id="SSF109604">
    <property type="entry name" value="HD-domain/PDEase-like"/>
    <property type="match status" value="1"/>
</dbReference>
<dbReference type="PROSITE" id="PS50861">
    <property type="entry name" value="AA_TRNA_LIGASE_II_GLYAB"/>
    <property type="match status" value="1"/>
</dbReference>
<sequence length="696" mass="76083">MSVFVMEIGTEELPARFLSGLEQEIASRFEAALAAANVEFGTLNVQSTPRRLALTIENIDAVQREAEEVVSGPPVRIAFDAQGRPTKAAEGFARTQGAELDELFTLTTDKGEYLAVRKKTGGRPVQEILSEVAPEIIAALPFPKKMKWGSGDFTFGRPLRWVLALFDSEVVSFTVAGIVSGNETCGHRVHGPGPFEVSGADAYAGTVRDKCHVTLCAADRRRVTVEGGDALAAQAGGRILWKDSLLDEVQGLCEHPVPCLGDFDPSFLELPAEVLLTSMESHQKSFGVAAADGSLMPHFLTVLNMTPQNSALVKKGWERVLRARLEDARFFWKADLASDFDSWLAKLDNVIFLAPLGSMGDKTRRLERLCRWLAAAVAPDIQEQAARAGRLSKADLVSEMVYEFDSLQGIMGGIYARRKGEDEIVAQAVSEQYLPAGPESPVPDSLCGALLSIADKADTLAGCFGLSMIPTGAADPYALRRCALGIARIMLEKGLRFDVRELFRYAQEGYGERQWKLKPEQAAEKLHEFFVLRLKNLFVSQGHETLLVEAALHAGADDVWAAGARLEALDRFSKSAEFGQAVLTFKRAANIIRKQGQEEDGGLDGCYDASLFEDEAEKALAGALEDIAPDFEARWAADDYHALFGLLGVLRPAVDAFFDSVMVMCEDPHIRRNRLNLLQSLVQRLGRLADFGALQM</sequence>
<evidence type="ECO:0000255" key="1">
    <source>
        <dbReference type="HAMAP-Rule" id="MF_00255"/>
    </source>
</evidence>
<comment type="catalytic activity">
    <reaction evidence="1">
        <text>tRNA(Gly) + glycine + ATP = glycyl-tRNA(Gly) + AMP + diphosphate</text>
        <dbReference type="Rhea" id="RHEA:16013"/>
        <dbReference type="Rhea" id="RHEA-COMP:9664"/>
        <dbReference type="Rhea" id="RHEA-COMP:9683"/>
        <dbReference type="ChEBI" id="CHEBI:30616"/>
        <dbReference type="ChEBI" id="CHEBI:33019"/>
        <dbReference type="ChEBI" id="CHEBI:57305"/>
        <dbReference type="ChEBI" id="CHEBI:78442"/>
        <dbReference type="ChEBI" id="CHEBI:78522"/>
        <dbReference type="ChEBI" id="CHEBI:456215"/>
        <dbReference type="EC" id="6.1.1.14"/>
    </reaction>
</comment>
<comment type="subunit">
    <text evidence="1">Tetramer of two alpha and two beta subunits.</text>
</comment>
<comment type="subcellular location">
    <subcellularLocation>
        <location evidence="1">Cytoplasm</location>
    </subcellularLocation>
</comment>
<comment type="similarity">
    <text evidence="1">Belongs to the class-II aminoacyl-tRNA synthetase family.</text>
</comment>
<gene>
    <name evidence="1" type="primary">glyS</name>
    <name type="ordered locus">Dde_2033</name>
</gene>
<reference key="1">
    <citation type="journal article" date="2011" name="J. Bacteriol.">
        <title>Complete genome sequence and updated annotation of Desulfovibrio alaskensis G20.</title>
        <authorList>
            <person name="Hauser L.J."/>
            <person name="Land M.L."/>
            <person name="Brown S.D."/>
            <person name="Larimer F."/>
            <person name="Keller K.L."/>
            <person name="Rapp-Giles B.J."/>
            <person name="Price M.N."/>
            <person name="Lin M."/>
            <person name="Bruce D.C."/>
            <person name="Detter J.C."/>
            <person name="Tapia R."/>
            <person name="Han C.S."/>
            <person name="Goodwin L.A."/>
            <person name="Cheng J.F."/>
            <person name="Pitluck S."/>
            <person name="Copeland A."/>
            <person name="Lucas S."/>
            <person name="Nolan M."/>
            <person name="Lapidus A.L."/>
            <person name="Palumbo A.V."/>
            <person name="Wall J.D."/>
        </authorList>
    </citation>
    <scope>NUCLEOTIDE SEQUENCE [LARGE SCALE GENOMIC DNA]</scope>
    <source>
        <strain>ATCC BAA-1058 / DSM 17464 / G20</strain>
    </source>
</reference>
<accession>Q30ZR6</accession>
<feature type="chain" id="PRO_1000197178" description="Glycine--tRNA ligase beta subunit">
    <location>
        <begin position="1"/>
        <end position="696"/>
    </location>
</feature>
<protein>
    <recommendedName>
        <fullName evidence="1">Glycine--tRNA ligase beta subunit</fullName>
        <ecNumber evidence="1">6.1.1.14</ecNumber>
    </recommendedName>
    <alternativeName>
        <fullName evidence="1">Glycyl-tRNA synthetase beta subunit</fullName>
        <shortName evidence="1">GlyRS</shortName>
    </alternativeName>
</protein>
<organism>
    <name type="scientific">Oleidesulfovibrio alaskensis (strain ATCC BAA-1058 / DSM 17464 / G20)</name>
    <name type="common">Desulfovibrio alaskensis</name>
    <dbReference type="NCBI Taxonomy" id="207559"/>
    <lineage>
        <taxon>Bacteria</taxon>
        <taxon>Pseudomonadati</taxon>
        <taxon>Thermodesulfobacteriota</taxon>
        <taxon>Desulfovibrionia</taxon>
        <taxon>Desulfovibrionales</taxon>
        <taxon>Desulfovibrionaceae</taxon>
        <taxon>Oleidesulfovibrio</taxon>
    </lineage>
</organism>
<name>SYGB_OLEA2</name>
<proteinExistence type="inferred from homology"/>
<keyword id="KW-0030">Aminoacyl-tRNA synthetase</keyword>
<keyword id="KW-0067">ATP-binding</keyword>
<keyword id="KW-0963">Cytoplasm</keyword>
<keyword id="KW-0436">Ligase</keyword>
<keyword id="KW-0547">Nucleotide-binding</keyword>
<keyword id="KW-0648">Protein biosynthesis</keyword>
<keyword id="KW-1185">Reference proteome</keyword>